<keyword id="KW-0056">Arginine metabolism</keyword>
<keyword id="KW-0963">Cytoplasm</keyword>
<keyword id="KW-0378">Hydrolase</keyword>
<name>ARCA_BACHK</name>
<protein>
    <recommendedName>
        <fullName evidence="1">Arginine deiminase</fullName>
        <shortName evidence="1">ADI</shortName>
        <ecNumber evidence="1">3.5.3.6</ecNumber>
    </recommendedName>
    <alternativeName>
        <fullName evidence="1">Arginine dihydrolase</fullName>
        <shortName evidence="1">AD</shortName>
    </alternativeName>
</protein>
<dbReference type="EC" id="3.5.3.6" evidence="1"/>
<dbReference type="EMBL" id="AE017355">
    <property type="protein sequence ID" value="AAT58997.1"/>
    <property type="molecule type" value="Genomic_DNA"/>
</dbReference>
<dbReference type="RefSeq" id="WP_000682329.1">
    <property type="nucleotide sequence ID" value="NC_005957.1"/>
</dbReference>
<dbReference type="RefSeq" id="YP_034691.1">
    <property type="nucleotide sequence ID" value="NC_005957.1"/>
</dbReference>
<dbReference type="SMR" id="Q6HP29"/>
<dbReference type="KEGG" id="btk:BT9727_0341"/>
<dbReference type="PATRIC" id="fig|281309.8.peg.363"/>
<dbReference type="HOGENOM" id="CLU_052662_0_1_9"/>
<dbReference type="UniPathway" id="UPA00254">
    <property type="reaction ID" value="UER00364"/>
</dbReference>
<dbReference type="Proteomes" id="UP000001301">
    <property type="component" value="Chromosome"/>
</dbReference>
<dbReference type="GO" id="GO:0005737">
    <property type="term" value="C:cytoplasm"/>
    <property type="evidence" value="ECO:0007669"/>
    <property type="project" value="UniProtKB-SubCell"/>
</dbReference>
<dbReference type="GO" id="GO:0016990">
    <property type="term" value="F:arginine deiminase activity"/>
    <property type="evidence" value="ECO:0007669"/>
    <property type="project" value="UniProtKB-UniRule"/>
</dbReference>
<dbReference type="GO" id="GO:0019547">
    <property type="term" value="P:arginine catabolic process to ornithine"/>
    <property type="evidence" value="ECO:0007669"/>
    <property type="project" value="UniProtKB-UniRule"/>
</dbReference>
<dbReference type="GO" id="GO:0019546">
    <property type="term" value="P:arginine deiminase pathway"/>
    <property type="evidence" value="ECO:0007669"/>
    <property type="project" value="TreeGrafter"/>
</dbReference>
<dbReference type="FunFam" id="1.10.3930.10:FF:000001">
    <property type="entry name" value="Arginine deiminase"/>
    <property type="match status" value="1"/>
</dbReference>
<dbReference type="Gene3D" id="1.10.3930.10">
    <property type="entry name" value="Arginine deiminase"/>
    <property type="match status" value="1"/>
</dbReference>
<dbReference type="Gene3D" id="3.75.10.10">
    <property type="entry name" value="L-arginine/glycine Amidinotransferase, Chain A"/>
    <property type="match status" value="1"/>
</dbReference>
<dbReference type="HAMAP" id="MF_00242">
    <property type="entry name" value="Arg_deiminase"/>
    <property type="match status" value="1"/>
</dbReference>
<dbReference type="InterPro" id="IPR003876">
    <property type="entry name" value="Arg_deiminase"/>
</dbReference>
<dbReference type="NCBIfam" id="TIGR01078">
    <property type="entry name" value="arcA"/>
    <property type="match status" value="1"/>
</dbReference>
<dbReference type="NCBIfam" id="NF002381">
    <property type="entry name" value="PRK01388.1"/>
    <property type="match status" value="1"/>
</dbReference>
<dbReference type="PANTHER" id="PTHR47271">
    <property type="entry name" value="ARGININE DEIMINASE"/>
    <property type="match status" value="1"/>
</dbReference>
<dbReference type="PANTHER" id="PTHR47271:SF2">
    <property type="entry name" value="ARGININE DEIMINASE"/>
    <property type="match status" value="1"/>
</dbReference>
<dbReference type="Pfam" id="PF02274">
    <property type="entry name" value="ADI"/>
    <property type="match status" value="1"/>
</dbReference>
<dbReference type="PIRSF" id="PIRSF006356">
    <property type="entry name" value="Arg_deiminase"/>
    <property type="match status" value="1"/>
</dbReference>
<dbReference type="PRINTS" id="PR01466">
    <property type="entry name" value="ARGDEIMINASE"/>
</dbReference>
<dbReference type="SUPFAM" id="SSF55909">
    <property type="entry name" value="Pentein"/>
    <property type="match status" value="1"/>
</dbReference>
<feature type="chain" id="PRO_0000182200" description="Arginine deiminase">
    <location>
        <begin position="1"/>
        <end position="410"/>
    </location>
</feature>
<feature type="active site" description="Amidino-cysteine intermediate" evidence="1">
    <location>
        <position position="400"/>
    </location>
</feature>
<proteinExistence type="inferred from homology"/>
<sequence>MKHPIHVTSEIGELQTVLLKRPGKEVENLTPDYLQQLLFDDIPYLPIIQKEHDYFAQTLRNRGVEVLYLEKLAAEALVDKKLREEFVDRILKEGQADVNVAHQTLKEYLLSFSNEELIQKIMGGVRKNEIETSKKTHLYELMEDHYPFYLDPMPNLYFTRDPAASVGDGLTINKMREPARRRESLFMEYIIKYHPRFAKHNVPIWLDRDYKFPIEGGDELILNEETIAIGVSARTSAKAIERLAKNLFSRQNKIKKVLAIEIPKCRAFMHLDTVFTMVDYDKFTIHPAIQGPKGNMNIYILEKGADEETLKITHRTSLMEALKEVLDLSELVLIPCGGGDVIASAREQWNDGSNTLAIAPGVVVTYDRNYVSNTLLREHGIEVIEVLSSELSRGRGGPRCMSMPIVRKDI</sequence>
<evidence type="ECO:0000255" key="1">
    <source>
        <dbReference type="HAMAP-Rule" id="MF_00242"/>
    </source>
</evidence>
<accession>Q6HP29</accession>
<organism>
    <name type="scientific">Bacillus thuringiensis subsp. konkukian (strain 97-27)</name>
    <dbReference type="NCBI Taxonomy" id="281309"/>
    <lineage>
        <taxon>Bacteria</taxon>
        <taxon>Bacillati</taxon>
        <taxon>Bacillota</taxon>
        <taxon>Bacilli</taxon>
        <taxon>Bacillales</taxon>
        <taxon>Bacillaceae</taxon>
        <taxon>Bacillus</taxon>
        <taxon>Bacillus cereus group</taxon>
    </lineage>
</organism>
<reference key="1">
    <citation type="journal article" date="2006" name="J. Bacteriol.">
        <title>Pathogenomic sequence analysis of Bacillus cereus and Bacillus thuringiensis isolates closely related to Bacillus anthracis.</title>
        <authorList>
            <person name="Han C.S."/>
            <person name="Xie G."/>
            <person name="Challacombe J.F."/>
            <person name="Altherr M.R."/>
            <person name="Bhotika S.S."/>
            <person name="Bruce D."/>
            <person name="Campbell C.S."/>
            <person name="Campbell M.L."/>
            <person name="Chen J."/>
            <person name="Chertkov O."/>
            <person name="Cleland C."/>
            <person name="Dimitrijevic M."/>
            <person name="Doggett N.A."/>
            <person name="Fawcett J.J."/>
            <person name="Glavina T."/>
            <person name="Goodwin L.A."/>
            <person name="Hill K.K."/>
            <person name="Hitchcock P."/>
            <person name="Jackson P.J."/>
            <person name="Keim P."/>
            <person name="Kewalramani A.R."/>
            <person name="Longmire J."/>
            <person name="Lucas S."/>
            <person name="Malfatti S."/>
            <person name="McMurry K."/>
            <person name="Meincke L.J."/>
            <person name="Misra M."/>
            <person name="Moseman B.L."/>
            <person name="Mundt M."/>
            <person name="Munk A.C."/>
            <person name="Okinaka R.T."/>
            <person name="Parson-Quintana B."/>
            <person name="Reilly L.P."/>
            <person name="Richardson P."/>
            <person name="Robinson D.L."/>
            <person name="Rubin E."/>
            <person name="Saunders E."/>
            <person name="Tapia R."/>
            <person name="Tesmer J.G."/>
            <person name="Thayer N."/>
            <person name="Thompson L.S."/>
            <person name="Tice H."/>
            <person name="Ticknor L.O."/>
            <person name="Wills P.L."/>
            <person name="Brettin T.S."/>
            <person name="Gilna P."/>
        </authorList>
    </citation>
    <scope>NUCLEOTIDE SEQUENCE [LARGE SCALE GENOMIC DNA]</scope>
    <source>
        <strain>97-27</strain>
    </source>
</reference>
<comment type="catalytic activity">
    <reaction evidence="1">
        <text>L-arginine + H2O = L-citrulline + NH4(+)</text>
        <dbReference type="Rhea" id="RHEA:19597"/>
        <dbReference type="ChEBI" id="CHEBI:15377"/>
        <dbReference type="ChEBI" id="CHEBI:28938"/>
        <dbReference type="ChEBI" id="CHEBI:32682"/>
        <dbReference type="ChEBI" id="CHEBI:57743"/>
        <dbReference type="EC" id="3.5.3.6"/>
    </reaction>
</comment>
<comment type="pathway">
    <text evidence="1">Amino-acid degradation; L-arginine degradation via ADI pathway; carbamoyl phosphate from L-arginine: step 1/2.</text>
</comment>
<comment type="subcellular location">
    <subcellularLocation>
        <location evidence="1">Cytoplasm</location>
    </subcellularLocation>
</comment>
<comment type="similarity">
    <text evidence="1">Belongs to the arginine deiminase family.</text>
</comment>
<gene>
    <name evidence="1" type="primary">arcA</name>
    <name type="ordered locus">BT9727_0341</name>
</gene>